<gene>
    <name type="primary">CMC4</name>
    <name type="ORF">C1Q_02861</name>
</gene>
<proteinExistence type="inferred from homology"/>
<sequence length="74" mass="8322">MSNPCQKEACAIQGYCLLSHQYDDAKCAKVIDQLYICCSKFYKDNGKDSRSPCCPLPSLLELKMKQRKLTPGDS</sequence>
<feature type="chain" id="PRO_0000408579" description="Cx9C motif-containing protein 4, mitochondrial">
    <location>
        <begin position="1"/>
        <end position="74"/>
    </location>
</feature>
<feature type="domain" description="CHCH" evidence="2">
    <location>
        <begin position="2"/>
        <end position="45"/>
    </location>
</feature>
<feature type="short sequence motif" description="Cx10C motif" evidence="2">
    <location>
        <begin position="5"/>
        <end position="16"/>
    </location>
</feature>
<feature type="short sequence motif" description="Cx9C motif" evidence="2">
    <location>
        <begin position="27"/>
        <end position="37"/>
    </location>
</feature>
<feature type="disulfide bond" evidence="2">
    <location>
        <begin position="5"/>
        <end position="37"/>
    </location>
</feature>
<feature type="disulfide bond" evidence="2">
    <location>
        <begin position="16"/>
        <end position="27"/>
    </location>
</feature>
<comment type="subcellular location">
    <subcellularLocation>
        <location evidence="1">Mitochondrion intermembrane space</location>
    </subcellularLocation>
    <text evidence="1">Imported into the mitochondria via the mitochondrial disulfide relay system.</text>
</comment>
<comment type="domain">
    <text evidence="1">The twin Cx9C motifs are involved in the recognition by the mitochondrial disulfide relay system.</text>
</comment>
<comment type="similarity">
    <text evidence="3">Belongs to the CMC4 family.</text>
</comment>
<name>CMC4_YEAS2</name>
<dbReference type="EMBL" id="ACFL01000141">
    <property type="protein sequence ID" value="EEU06611.1"/>
    <property type="molecule type" value="Genomic_DNA"/>
</dbReference>
<dbReference type="SMR" id="C7GRF7"/>
<dbReference type="OrthoDB" id="23752at4893"/>
<dbReference type="Proteomes" id="UP000008073">
    <property type="component" value="Unassembled WGS sequence"/>
</dbReference>
<dbReference type="GO" id="GO:0005758">
    <property type="term" value="C:mitochondrial intermembrane space"/>
    <property type="evidence" value="ECO:0007669"/>
    <property type="project" value="UniProtKB-SubCell"/>
</dbReference>
<dbReference type="FunFam" id="1.10.287.1130:FF:000008">
    <property type="entry name" value="Cx9C motif-containing protein 4, mitochondrial"/>
    <property type="match status" value="1"/>
</dbReference>
<dbReference type="Gene3D" id="1.10.287.1130">
    <property type="entry name" value="CytochromE C oxidase copper chaperone"/>
    <property type="match status" value="1"/>
</dbReference>
<dbReference type="InterPro" id="IPR027179">
    <property type="entry name" value="CMC4"/>
</dbReference>
<dbReference type="InterPro" id="IPR009069">
    <property type="entry name" value="Cys_alpha_HP_mot_SF"/>
</dbReference>
<dbReference type="PANTHER" id="PTHR15590">
    <property type="entry name" value="CX9C MOTIF-CONTAINING PROTEIN 4"/>
    <property type="match status" value="1"/>
</dbReference>
<dbReference type="PANTHER" id="PTHR15590:SF0">
    <property type="entry name" value="CX9C MOTIF-CONTAINING PROTEIN 4"/>
    <property type="match status" value="1"/>
</dbReference>
<dbReference type="Pfam" id="PF08991">
    <property type="entry name" value="CMC4"/>
    <property type="match status" value="1"/>
</dbReference>
<dbReference type="SUPFAM" id="SSF47072">
    <property type="entry name" value="Cysteine alpha-hairpin motif"/>
    <property type="match status" value="1"/>
</dbReference>
<dbReference type="PROSITE" id="PS51808">
    <property type="entry name" value="CHCH"/>
    <property type="match status" value="1"/>
</dbReference>
<keyword id="KW-1015">Disulfide bond</keyword>
<keyword id="KW-0496">Mitochondrion</keyword>
<keyword id="KW-0677">Repeat</keyword>
<accession>C7GRF7</accession>
<protein>
    <recommendedName>
        <fullName>Cx9C motif-containing protein 4, mitochondrial</fullName>
    </recommendedName>
</protein>
<evidence type="ECO:0000250" key="1"/>
<evidence type="ECO:0000255" key="2">
    <source>
        <dbReference type="PROSITE-ProRule" id="PRU01150"/>
    </source>
</evidence>
<evidence type="ECO:0000305" key="3"/>
<organism>
    <name type="scientific">Saccharomyces cerevisiae (strain JAY291)</name>
    <name type="common">Baker's yeast</name>
    <dbReference type="NCBI Taxonomy" id="574961"/>
    <lineage>
        <taxon>Eukaryota</taxon>
        <taxon>Fungi</taxon>
        <taxon>Dikarya</taxon>
        <taxon>Ascomycota</taxon>
        <taxon>Saccharomycotina</taxon>
        <taxon>Saccharomycetes</taxon>
        <taxon>Saccharomycetales</taxon>
        <taxon>Saccharomycetaceae</taxon>
        <taxon>Saccharomyces</taxon>
    </lineage>
</organism>
<reference key="1">
    <citation type="journal article" date="2009" name="Genome Res.">
        <title>Genome structure of a Saccharomyces cerevisiae strain widely used in bioethanol production.</title>
        <authorList>
            <person name="Argueso J.L."/>
            <person name="Carazzolle M.F."/>
            <person name="Mieczkowski P.A."/>
            <person name="Duarte F.M."/>
            <person name="Netto O.V.C."/>
            <person name="Missawa S.K."/>
            <person name="Galzerani F."/>
            <person name="Costa G.G.L."/>
            <person name="Vidal R.O."/>
            <person name="Noronha M.F."/>
            <person name="Dominska M."/>
            <person name="Andrietta M.G.S."/>
            <person name="Andrietta S.R."/>
            <person name="Cunha A.F."/>
            <person name="Gomes L.H."/>
            <person name="Tavares F.C.A."/>
            <person name="Alcarde A.R."/>
            <person name="Dietrich F.S."/>
            <person name="McCusker J.H."/>
            <person name="Petes T.D."/>
            <person name="Pereira G.A.G."/>
        </authorList>
    </citation>
    <scope>NUCLEOTIDE SEQUENCE [LARGE SCALE GENOMIC DNA]</scope>
    <source>
        <strain>JAY291</strain>
    </source>
</reference>